<evidence type="ECO:0000255" key="1">
    <source>
        <dbReference type="HAMAP-Rule" id="MF_00050"/>
    </source>
</evidence>
<comment type="function">
    <text evidence="1">Associates with the EF-Tu.GDP complex and induces the exchange of GDP to GTP. It remains bound to the aminoacyl-tRNA.EF-Tu.GTP complex up to the GTP hydrolysis stage on the ribosome.</text>
</comment>
<comment type="subcellular location">
    <subcellularLocation>
        <location evidence="1">Cytoplasm</location>
    </subcellularLocation>
</comment>
<comment type="similarity">
    <text evidence="1">Belongs to the EF-Ts family.</text>
</comment>
<feature type="chain" id="PRO_0000241495" description="Elongation factor Ts">
    <location>
        <begin position="1"/>
        <end position="303"/>
    </location>
</feature>
<feature type="region of interest" description="Involved in Mg(2+) ion dislocation from EF-Tu" evidence="1">
    <location>
        <begin position="81"/>
        <end position="84"/>
    </location>
</feature>
<dbReference type="EMBL" id="AE017243">
    <property type="protein sequence ID" value="AAZ44146.1"/>
    <property type="molecule type" value="Genomic_DNA"/>
</dbReference>
<dbReference type="RefSeq" id="WP_011283873.1">
    <property type="nucleotide sequence ID" value="NC_007295.1"/>
</dbReference>
<dbReference type="SMR" id="Q4AAW7"/>
<dbReference type="GeneID" id="41334341"/>
<dbReference type="KEGG" id="mhj:MHJ_0052"/>
<dbReference type="eggNOG" id="COG0264">
    <property type="taxonomic scope" value="Bacteria"/>
</dbReference>
<dbReference type="HOGENOM" id="CLU_047155_0_2_14"/>
<dbReference type="OrthoDB" id="9808348at2"/>
<dbReference type="Proteomes" id="UP000000548">
    <property type="component" value="Chromosome"/>
</dbReference>
<dbReference type="GO" id="GO:0005737">
    <property type="term" value="C:cytoplasm"/>
    <property type="evidence" value="ECO:0007669"/>
    <property type="project" value="UniProtKB-SubCell"/>
</dbReference>
<dbReference type="GO" id="GO:0003746">
    <property type="term" value="F:translation elongation factor activity"/>
    <property type="evidence" value="ECO:0007669"/>
    <property type="project" value="UniProtKB-UniRule"/>
</dbReference>
<dbReference type="CDD" id="cd14275">
    <property type="entry name" value="UBA_EF-Ts"/>
    <property type="match status" value="1"/>
</dbReference>
<dbReference type="FunFam" id="1.10.8.10:FF:000001">
    <property type="entry name" value="Elongation factor Ts"/>
    <property type="match status" value="1"/>
</dbReference>
<dbReference type="Gene3D" id="1.10.286.20">
    <property type="match status" value="1"/>
</dbReference>
<dbReference type="Gene3D" id="1.10.8.10">
    <property type="entry name" value="DNA helicase RuvA subunit, C-terminal domain"/>
    <property type="match status" value="1"/>
</dbReference>
<dbReference type="Gene3D" id="3.30.479.20">
    <property type="entry name" value="Elongation factor Ts, dimerisation domain"/>
    <property type="match status" value="2"/>
</dbReference>
<dbReference type="HAMAP" id="MF_00050">
    <property type="entry name" value="EF_Ts"/>
    <property type="match status" value="1"/>
</dbReference>
<dbReference type="InterPro" id="IPR036402">
    <property type="entry name" value="EF-Ts_dimer_sf"/>
</dbReference>
<dbReference type="InterPro" id="IPR001816">
    <property type="entry name" value="Transl_elong_EFTs/EF1B"/>
</dbReference>
<dbReference type="InterPro" id="IPR014039">
    <property type="entry name" value="Transl_elong_EFTs/EF1B_dimer"/>
</dbReference>
<dbReference type="InterPro" id="IPR018101">
    <property type="entry name" value="Transl_elong_Ts_CS"/>
</dbReference>
<dbReference type="InterPro" id="IPR009060">
    <property type="entry name" value="UBA-like_sf"/>
</dbReference>
<dbReference type="NCBIfam" id="TIGR00116">
    <property type="entry name" value="tsf"/>
    <property type="match status" value="1"/>
</dbReference>
<dbReference type="PANTHER" id="PTHR11741">
    <property type="entry name" value="ELONGATION FACTOR TS"/>
    <property type="match status" value="1"/>
</dbReference>
<dbReference type="PANTHER" id="PTHR11741:SF0">
    <property type="entry name" value="ELONGATION FACTOR TS, MITOCHONDRIAL"/>
    <property type="match status" value="1"/>
</dbReference>
<dbReference type="Pfam" id="PF00889">
    <property type="entry name" value="EF_TS"/>
    <property type="match status" value="1"/>
</dbReference>
<dbReference type="SUPFAM" id="SSF54713">
    <property type="entry name" value="Elongation factor Ts (EF-Ts), dimerisation domain"/>
    <property type="match status" value="2"/>
</dbReference>
<dbReference type="SUPFAM" id="SSF46934">
    <property type="entry name" value="UBA-like"/>
    <property type="match status" value="1"/>
</dbReference>
<dbReference type="PROSITE" id="PS01127">
    <property type="entry name" value="EF_TS_2"/>
    <property type="match status" value="1"/>
</dbReference>
<reference key="1">
    <citation type="journal article" date="2005" name="J. Bacteriol.">
        <title>Swine and poultry pathogens: the complete genome sequences of two strains of Mycoplasma hyopneumoniae and a strain of Mycoplasma synoviae.</title>
        <authorList>
            <person name="Vasconcelos A.T.R."/>
            <person name="Ferreira H.B."/>
            <person name="Bizarro C.V."/>
            <person name="Bonatto S.L."/>
            <person name="Carvalho M.O."/>
            <person name="Pinto P.M."/>
            <person name="Almeida D.F."/>
            <person name="Almeida L.G.P."/>
            <person name="Almeida R."/>
            <person name="Alves-Junior L."/>
            <person name="Assuncao E.N."/>
            <person name="Azevedo V.A.C."/>
            <person name="Bogo M.R."/>
            <person name="Brigido M.M."/>
            <person name="Brocchi M."/>
            <person name="Burity H.A."/>
            <person name="Camargo A.A."/>
            <person name="Camargo S.S."/>
            <person name="Carepo M.S."/>
            <person name="Carraro D.M."/>
            <person name="de Mattos Cascardo J.C."/>
            <person name="Castro L.A."/>
            <person name="Cavalcanti G."/>
            <person name="Chemale G."/>
            <person name="Collevatti R.G."/>
            <person name="Cunha C.W."/>
            <person name="Dallagiovanna B."/>
            <person name="Dambros B.P."/>
            <person name="Dellagostin O.A."/>
            <person name="Falcao C."/>
            <person name="Fantinatti-Garboggini F."/>
            <person name="Felipe M.S.S."/>
            <person name="Fiorentin L."/>
            <person name="Franco G.R."/>
            <person name="Freitas N.S.A."/>
            <person name="Frias D."/>
            <person name="Grangeiro T.B."/>
            <person name="Grisard E.C."/>
            <person name="Guimaraes C.T."/>
            <person name="Hungria M."/>
            <person name="Jardim S.N."/>
            <person name="Krieger M.A."/>
            <person name="Laurino J.P."/>
            <person name="Lima L.F.A."/>
            <person name="Lopes M.I."/>
            <person name="Loreto E.L.S."/>
            <person name="Madeira H.M.F."/>
            <person name="Manfio G.P."/>
            <person name="Maranhao A.Q."/>
            <person name="Martinkovics C.T."/>
            <person name="Medeiros S.R.B."/>
            <person name="Moreira M.A.M."/>
            <person name="Neiva M."/>
            <person name="Ramalho-Neto C.E."/>
            <person name="Nicolas M.F."/>
            <person name="Oliveira S.C."/>
            <person name="Paixao R.F.C."/>
            <person name="Pedrosa F.O."/>
            <person name="Pena S.D.J."/>
            <person name="Pereira M."/>
            <person name="Pereira-Ferrari L."/>
            <person name="Piffer I."/>
            <person name="Pinto L.S."/>
            <person name="Potrich D.P."/>
            <person name="Salim A.C.M."/>
            <person name="Santos F.R."/>
            <person name="Schmitt R."/>
            <person name="Schneider M.P.C."/>
            <person name="Schrank A."/>
            <person name="Schrank I.S."/>
            <person name="Schuck A.F."/>
            <person name="Seuanez H.N."/>
            <person name="Silva D.W."/>
            <person name="Silva R."/>
            <person name="Silva S.C."/>
            <person name="Soares C.M.A."/>
            <person name="Souza K.R.L."/>
            <person name="Souza R.C."/>
            <person name="Staats C.C."/>
            <person name="Steffens M.B.R."/>
            <person name="Teixeira S.M.R."/>
            <person name="Urmenyi T.P."/>
            <person name="Vainstein M.H."/>
            <person name="Zuccherato L.W."/>
            <person name="Simpson A.J.G."/>
            <person name="Zaha A."/>
        </authorList>
    </citation>
    <scope>NUCLEOTIDE SEQUENCE [LARGE SCALE GENOMIC DNA]</scope>
    <source>
        <strain>J / ATCC 25934 / NCTC 10110</strain>
    </source>
</reference>
<organism>
    <name type="scientific">Mesomycoplasma hyopneumoniae (strain J / ATCC 25934 / NCTC 10110)</name>
    <name type="common">Mycoplasma hyopneumoniae</name>
    <dbReference type="NCBI Taxonomy" id="262719"/>
    <lineage>
        <taxon>Bacteria</taxon>
        <taxon>Bacillati</taxon>
        <taxon>Mycoplasmatota</taxon>
        <taxon>Mycoplasmoidales</taxon>
        <taxon>Metamycoplasmataceae</taxon>
        <taxon>Mesomycoplasma</taxon>
    </lineage>
</organism>
<gene>
    <name evidence="1" type="primary">tsf</name>
    <name type="ordered locus">MHJ_0052</name>
</gene>
<keyword id="KW-0963">Cytoplasm</keyword>
<keyword id="KW-0251">Elongation factor</keyword>
<keyword id="KW-0648">Protein biosynthesis</keyword>
<name>EFTS_MESHJ</name>
<accession>Q4AAW7</accession>
<sequence length="303" mass="33975">MSQIDKMAKIKKLREISDAPFVDCKKALENSDYDIDLAINWLNKSGKSKALKKSDRIAAEGLVLAKKDPNSVLVFELNSETDFVAKNQNFINLQQKIGELLLANDFTNLEDALLIQDEAGRPISELLILATATIGEKITLRRVFKTKYSLEQSVEVYTHSNGQIAVITILKGGNLEIAKNISMHVAALNPQYILKIEVPNEKLQEIQLEVEKKAFAEVKNFEKKPENVKAGILKGMIDKQLSEFVLELQPLATDSAITVEKYLAQNSATLEKVVRFEVGEGIQKQNVDFSAEVNQQIQEFQKK</sequence>
<protein>
    <recommendedName>
        <fullName evidence="1">Elongation factor Ts</fullName>
        <shortName evidence="1">EF-Ts</shortName>
    </recommendedName>
</protein>
<proteinExistence type="inferred from homology"/>